<gene>
    <name evidence="1" type="primary">rplX</name>
    <name type="ordered locus">PFL_5571</name>
</gene>
<keyword id="KW-0687">Ribonucleoprotein</keyword>
<keyword id="KW-0689">Ribosomal protein</keyword>
<keyword id="KW-0694">RNA-binding</keyword>
<keyword id="KW-0699">rRNA-binding</keyword>
<feature type="chain" id="PRO_0000241641" description="Large ribosomal subunit protein uL24">
    <location>
        <begin position="1"/>
        <end position="104"/>
    </location>
</feature>
<reference key="1">
    <citation type="journal article" date="2005" name="Nat. Biotechnol.">
        <title>Complete genome sequence of the plant commensal Pseudomonas fluorescens Pf-5.</title>
        <authorList>
            <person name="Paulsen I.T."/>
            <person name="Press C.M."/>
            <person name="Ravel J."/>
            <person name="Kobayashi D.Y."/>
            <person name="Myers G.S.A."/>
            <person name="Mavrodi D.V."/>
            <person name="DeBoy R.T."/>
            <person name="Seshadri R."/>
            <person name="Ren Q."/>
            <person name="Madupu R."/>
            <person name="Dodson R.J."/>
            <person name="Durkin A.S."/>
            <person name="Brinkac L.M."/>
            <person name="Daugherty S.C."/>
            <person name="Sullivan S.A."/>
            <person name="Rosovitz M.J."/>
            <person name="Gwinn M.L."/>
            <person name="Zhou L."/>
            <person name="Schneider D.J."/>
            <person name="Cartinhour S.W."/>
            <person name="Nelson W.C."/>
            <person name="Weidman J."/>
            <person name="Watkins K."/>
            <person name="Tran K."/>
            <person name="Khouri H."/>
            <person name="Pierson E.A."/>
            <person name="Pierson L.S. III"/>
            <person name="Thomashow L.S."/>
            <person name="Loper J.E."/>
        </authorList>
    </citation>
    <scope>NUCLEOTIDE SEQUENCE [LARGE SCALE GENOMIC DNA]</scope>
    <source>
        <strain>ATCC BAA-477 / NRRL B-23932 / Pf-5</strain>
    </source>
</reference>
<dbReference type="EMBL" id="CP000076">
    <property type="protein sequence ID" value="AAY94776.1"/>
    <property type="molecule type" value="Genomic_DNA"/>
</dbReference>
<dbReference type="RefSeq" id="WP_010443924.1">
    <property type="nucleotide sequence ID" value="NC_004129.6"/>
</dbReference>
<dbReference type="SMR" id="Q4K544"/>
<dbReference type="STRING" id="220664.PFL_5571"/>
<dbReference type="GeneID" id="57478520"/>
<dbReference type="KEGG" id="pfl:PFL_5571"/>
<dbReference type="eggNOG" id="COG0198">
    <property type="taxonomic scope" value="Bacteria"/>
</dbReference>
<dbReference type="HOGENOM" id="CLU_093315_2_2_6"/>
<dbReference type="Proteomes" id="UP000008540">
    <property type="component" value="Chromosome"/>
</dbReference>
<dbReference type="GO" id="GO:1990904">
    <property type="term" value="C:ribonucleoprotein complex"/>
    <property type="evidence" value="ECO:0007669"/>
    <property type="project" value="UniProtKB-KW"/>
</dbReference>
<dbReference type="GO" id="GO:0005840">
    <property type="term" value="C:ribosome"/>
    <property type="evidence" value="ECO:0007669"/>
    <property type="project" value="UniProtKB-KW"/>
</dbReference>
<dbReference type="GO" id="GO:0019843">
    <property type="term" value="F:rRNA binding"/>
    <property type="evidence" value="ECO:0007669"/>
    <property type="project" value="UniProtKB-UniRule"/>
</dbReference>
<dbReference type="GO" id="GO:0003735">
    <property type="term" value="F:structural constituent of ribosome"/>
    <property type="evidence" value="ECO:0007669"/>
    <property type="project" value="InterPro"/>
</dbReference>
<dbReference type="GO" id="GO:0006412">
    <property type="term" value="P:translation"/>
    <property type="evidence" value="ECO:0007669"/>
    <property type="project" value="UniProtKB-UniRule"/>
</dbReference>
<dbReference type="CDD" id="cd06089">
    <property type="entry name" value="KOW_RPL26"/>
    <property type="match status" value="1"/>
</dbReference>
<dbReference type="FunFam" id="2.30.30.30:FF:000004">
    <property type="entry name" value="50S ribosomal protein L24"/>
    <property type="match status" value="1"/>
</dbReference>
<dbReference type="Gene3D" id="2.30.30.30">
    <property type="match status" value="1"/>
</dbReference>
<dbReference type="HAMAP" id="MF_01326_B">
    <property type="entry name" value="Ribosomal_uL24_B"/>
    <property type="match status" value="1"/>
</dbReference>
<dbReference type="InterPro" id="IPR005824">
    <property type="entry name" value="KOW"/>
</dbReference>
<dbReference type="InterPro" id="IPR014722">
    <property type="entry name" value="Rib_uL2_dom2"/>
</dbReference>
<dbReference type="InterPro" id="IPR003256">
    <property type="entry name" value="Ribosomal_uL24"/>
</dbReference>
<dbReference type="InterPro" id="IPR005825">
    <property type="entry name" value="Ribosomal_uL24_CS"/>
</dbReference>
<dbReference type="InterPro" id="IPR041988">
    <property type="entry name" value="Ribosomal_uL24_KOW"/>
</dbReference>
<dbReference type="InterPro" id="IPR008991">
    <property type="entry name" value="Translation_prot_SH3-like_sf"/>
</dbReference>
<dbReference type="NCBIfam" id="TIGR01079">
    <property type="entry name" value="rplX_bact"/>
    <property type="match status" value="1"/>
</dbReference>
<dbReference type="PANTHER" id="PTHR12903">
    <property type="entry name" value="MITOCHONDRIAL RIBOSOMAL PROTEIN L24"/>
    <property type="match status" value="1"/>
</dbReference>
<dbReference type="Pfam" id="PF00467">
    <property type="entry name" value="KOW"/>
    <property type="match status" value="1"/>
</dbReference>
<dbReference type="Pfam" id="PF17136">
    <property type="entry name" value="ribosomal_L24"/>
    <property type="match status" value="1"/>
</dbReference>
<dbReference type="SMART" id="SM00739">
    <property type="entry name" value="KOW"/>
    <property type="match status" value="1"/>
</dbReference>
<dbReference type="SUPFAM" id="SSF50104">
    <property type="entry name" value="Translation proteins SH3-like domain"/>
    <property type="match status" value="1"/>
</dbReference>
<dbReference type="PROSITE" id="PS01108">
    <property type="entry name" value="RIBOSOMAL_L24"/>
    <property type="match status" value="1"/>
</dbReference>
<proteinExistence type="inferred from homology"/>
<name>RL24_PSEF5</name>
<comment type="function">
    <text evidence="1">One of two assembly initiator proteins, it binds directly to the 5'-end of the 23S rRNA, where it nucleates assembly of the 50S subunit.</text>
</comment>
<comment type="function">
    <text evidence="1">One of the proteins that surrounds the polypeptide exit tunnel on the outside of the subunit.</text>
</comment>
<comment type="subunit">
    <text evidence="1">Part of the 50S ribosomal subunit.</text>
</comment>
<comment type="similarity">
    <text evidence="1">Belongs to the universal ribosomal protein uL24 family.</text>
</comment>
<protein>
    <recommendedName>
        <fullName evidence="1">Large ribosomal subunit protein uL24</fullName>
    </recommendedName>
    <alternativeName>
        <fullName evidence="2">50S ribosomal protein L24</fullName>
    </alternativeName>
</protein>
<organism>
    <name type="scientific">Pseudomonas fluorescens (strain ATCC BAA-477 / NRRL B-23932 / Pf-5)</name>
    <dbReference type="NCBI Taxonomy" id="220664"/>
    <lineage>
        <taxon>Bacteria</taxon>
        <taxon>Pseudomonadati</taxon>
        <taxon>Pseudomonadota</taxon>
        <taxon>Gammaproteobacteria</taxon>
        <taxon>Pseudomonadales</taxon>
        <taxon>Pseudomonadaceae</taxon>
        <taxon>Pseudomonas</taxon>
    </lineage>
</organism>
<evidence type="ECO:0000255" key="1">
    <source>
        <dbReference type="HAMAP-Rule" id="MF_01326"/>
    </source>
</evidence>
<evidence type="ECO:0000305" key="2"/>
<accession>Q4K544</accession>
<sequence>MQKIRRDDEIIVIAGKDKGKRGKVLKVLADDRLVVGGLNLVKRHTKPNPMSGVQGGIVEKEAPLHASNVAIFNSETNKADRVGFKVEDGKKIRVFKSTQKAVDA</sequence>